<evidence type="ECO:0000255" key="1">
    <source>
        <dbReference type="HAMAP-Rule" id="MF_00071"/>
    </source>
</evidence>
<protein>
    <recommendedName>
        <fullName evidence="1">Elongation factor 4</fullName>
        <shortName evidence="1">EF-4</shortName>
        <ecNumber evidence="1">3.6.5.n1</ecNumber>
    </recommendedName>
    <alternativeName>
        <fullName evidence="1">Ribosomal back-translocase LepA</fullName>
    </alternativeName>
</protein>
<sequence length="599" mass="66007">MSDLSHIRNFSIIAHIDHGKSTLADRFIQMCGGLAAREMEAQVLDSMDLERERGITIKAHSVTLHYKAKDGKTYQLNFIDTPGHVDFTYEVSRSLAACEGALLVVDAGQGVEAQSVANCYTAIEQGLEVMPVLNKMDLPQADPDRVKDEIEKIIGIDATDAVACSAKSGMGVDEVLERLVQTIPAPTGDIEAPLQALIIDSWFDNYLGVVSLVRVRQGRVKKGDKILVKSTGKVHLVDSVGVFTPKHTATADLKAGEVGFIIASIKDIHGAPVGDTLTLSSTPEVEVLPGFKKIQPQVYAGLFPVSSDDFEDFRDALQKLTLNDSSLQYMPESSDALGFGFRCGFLGMLHMEIIQERLEREYDLDLITTAPSVIYELELKTGETITVDNPSKLPDVSSVADFREPIVTATILVPQEHLGNVITLCIEKRGVQRDMQFLGSQVQVRYDLPMNEVVLDFFDRLKSTSRGYASLDYHFDRYQSANLVKLDVLINGDKVDALALIVHRDNAAYKGRALTEKMKELIPRQMFDVAIQAAIGGQIIARTTVKALRKNVLAKCYGGDVSRKKKLLEKQKAGKKRMKQVGNVEIPQEAFLAVLRLDS</sequence>
<reference key="1">
    <citation type="submission" date="2007-04" db="EMBL/GenBank/DDBJ databases">
        <title>Complete sequence of Pseudomonas mendocina ymp.</title>
        <authorList>
            <consortium name="US DOE Joint Genome Institute"/>
            <person name="Copeland A."/>
            <person name="Lucas S."/>
            <person name="Lapidus A."/>
            <person name="Barry K."/>
            <person name="Glavina del Rio T."/>
            <person name="Dalin E."/>
            <person name="Tice H."/>
            <person name="Pitluck S."/>
            <person name="Kiss H."/>
            <person name="Brettin T."/>
            <person name="Detter J.C."/>
            <person name="Bruce D."/>
            <person name="Han C."/>
            <person name="Schmutz J."/>
            <person name="Larimer F."/>
            <person name="Land M."/>
            <person name="Hauser L."/>
            <person name="Kyrpides N."/>
            <person name="Mikhailova N."/>
            <person name="Hersman L."/>
            <person name="Dubois J."/>
            <person name="Maurice P."/>
            <person name="Richardson P."/>
        </authorList>
    </citation>
    <scope>NUCLEOTIDE SEQUENCE [LARGE SCALE GENOMIC DNA]</scope>
    <source>
        <strain>ymp</strain>
    </source>
</reference>
<name>LEPA_ECTM1</name>
<accession>A4XSC1</accession>
<feature type="chain" id="PRO_1000032040" description="Elongation factor 4">
    <location>
        <begin position="1"/>
        <end position="599"/>
    </location>
</feature>
<feature type="domain" description="tr-type G">
    <location>
        <begin position="5"/>
        <end position="187"/>
    </location>
</feature>
<feature type="binding site" evidence="1">
    <location>
        <begin position="17"/>
        <end position="22"/>
    </location>
    <ligand>
        <name>GTP</name>
        <dbReference type="ChEBI" id="CHEBI:37565"/>
    </ligand>
</feature>
<feature type="binding site" evidence="1">
    <location>
        <begin position="134"/>
        <end position="137"/>
    </location>
    <ligand>
        <name>GTP</name>
        <dbReference type="ChEBI" id="CHEBI:37565"/>
    </ligand>
</feature>
<keyword id="KW-0997">Cell inner membrane</keyword>
<keyword id="KW-1003">Cell membrane</keyword>
<keyword id="KW-0342">GTP-binding</keyword>
<keyword id="KW-0378">Hydrolase</keyword>
<keyword id="KW-0472">Membrane</keyword>
<keyword id="KW-0547">Nucleotide-binding</keyword>
<keyword id="KW-0648">Protein biosynthesis</keyword>
<gene>
    <name evidence="1" type="primary">lepA</name>
    <name type="ordered locus">Pmen_1472</name>
</gene>
<dbReference type="EC" id="3.6.5.n1" evidence="1"/>
<dbReference type="EMBL" id="CP000680">
    <property type="protein sequence ID" value="ABP84237.1"/>
    <property type="molecule type" value="Genomic_DNA"/>
</dbReference>
<dbReference type="SMR" id="A4XSC1"/>
<dbReference type="STRING" id="399739.Pmen_1472"/>
<dbReference type="KEGG" id="pmy:Pmen_1472"/>
<dbReference type="PATRIC" id="fig|399739.8.peg.1494"/>
<dbReference type="eggNOG" id="COG0481">
    <property type="taxonomic scope" value="Bacteria"/>
</dbReference>
<dbReference type="HOGENOM" id="CLU_009995_3_3_6"/>
<dbReference type="OrthoDB" id="9801472at2"/>
<dbReference type="GO" id="GO:0005886">
    <property type="term" value="C:plasma membrane"/>
    <property type="evidence" value="ECO:0007669"/>
    <property type="project" value="UniProtKB-SubCell"/>
</dbReference>
<dbReference type="GO" id="GO:0005525">
    <property type="term" value="F:GTP binding"/>
    <property type="evidence" value="ECO:0007669"/>
    <property type="project" value="UniProtKB-UniRule"/>
</dbReference>
<dbReference type="GO" id="GO:0003924">
    <property type="term" value="F:GTPase activity"/>
    <property type="evidence" value="ECO:0007669"/>
    <property type="project" value="UniProtKB-UniRule"/>
</dbReference>
<dbReference type="GO" id="GO:0097216">
    <property type="term" value="F:guanosine tetraphosphate binding"/>
    <property type="evidence" value="ECO:0007669"/>
    <property type="project" value="UniProtKB-ARBA"/>
</dbReference>
<dbReference type="GO" id="GO:0043022">
    <property type="term" value="F:ribosome binding"/>
    <property type="evidence" value="ECO:0007669"/>
    <property type="project" value="UniProtKB-UniRule"/>
</dbReference>
<dbReference type="GO" id="GO:0003746">
    <property type="term" value="F:translation elongation factor activity"/>
    <property type="evidence" value="ECO:0007669"/>
    <property type="project" value="UniProtKB-UniRule"/>
</dbReference>
<dbReference type="GO" id="GO:0045727">
    <property type="term" value="P:positive regulation of translation"/>
    <property type="evidence" value="ECO:0007669"/>
    <property type="project" value="UniProtKB-UniRule"/>
</dbReference>
<dbReference type="CDD" id="cd03699">
    <property type="entry name" value="EF4_II"/>
    <property type="match status" value="1"/>
</dbReference>
<dbReference type="CDD" id="cd16260">
    <property type="entry name" value="EF4_III"/>
    <property type="match status" value="1"/>
</dbReference>
<dbReference type="CDD" id="cd01890">
    <property type="entry name" value="LepA"/>
    <property type="match status" value="1"/>
</dbReference>
<dbReference type="CDD" id="cd03709">
    <property type="entry name" value="lepA_C"/>
    <property type="match status" value="1"/>
</dbReference>
<dbReference type="FunFam" id="3.40.50.300:FF:000078">
    <property type="entry name" value="Elongation factor 4"/>
    <property type="match status" value="1"/>
</dbReference>
<dbReference type="FunFam" id="2.40.30.10:FF:000015">
    <property type="entry name" value="Translation factor GUF1, mitochondrial"/>
    <property type="match status" value="1"/>
</dbReference>
<dbReference type="FunFam" id="3.30.70.240:FF:000007">
    <property type="entry name" value="Translation factor GUF1, mitochondrial"/>
    <property type="match status" value="1"/>
</dbReference>
<dbReference type="FunFam" id="3.30.70.2570:FF:000001">
    <property type="entry name" value="Translation factor GUF1, mitochondrial"/>
    <property type="match status" value="1"/>
</dbReference>
<dbReference type="FunFam" id="3.30.70.870:FF:000004">
    <property type="entry name" value="Translation factor GUF1, mitochondrial"/>
    <property type="match status" value="1"/>
</dbReference>
<dbReference type="Gene3D" id="3.30.70.240">
    <property type="match status" value="1"/>
</dbReference>
<dbReference type="Gene3D" id="3.30.70.2570">
    <property type="entry name" value="Elongation factor 4, C-terminal domain"/>
    <property type="match status" value="1"/>
</dbReference>
<dbReference type="Gene3D" id="3.30.70.870">
    <property type="entry name" value="Elongation Factor G (Translational Gtpase), domain 3"/>
    <property type="match status" value="1"/>
</dbReference>
<dbReference type="Gene3D" id="3.40.50.300">
    <property type="entry name" value="P-loop containing nucleotide triphosphate hydrolases"/>
    <property type="match status" value="1"/>
</dbReference>
<dbReference type="Gene3D" id="2.40.30.10">
    <property type="entry name" value="Translation factors"/>
    <property type="match status" value="1"/>
</dbReference>
<dbReference type="HAMAP" id="MF_00071">
    <property type="entry name" value="LepA"/>
    <property type="match status" value="1"/>
</dbReference>
<dbReference type="InterPro" id="IPR006297">
    <property type="entry name" value="EF-4"/>
</dbReference>
<dbReference type="InterPro" id="IPR035647">
    <property type="entry name" value="EFG_III/V"/>
</dbReference>
<dbReference type="InterPro" id="IPR000640">
    <property type="entry name" value="EFG_V-like"/>
</dbReference>
<dbReference type="InterPro" id="IPR004161">
    <property type="entry name" value="EFTu-like_2"/>
</dbReference>
<dbReference type="InterPro" id="IPR038363">
    <property type="entry name" value="LepA_C_sf"/>
</dbReference>
<dbReference type="InterPro" id="IPR013842">
    <property type="entry name" value="LepA_CTD"/>
</dbReference>
<dbReference type="InterPro" id="IPR035654">
    <property type="entry name" value="LepA_IV"/>
</dbReference>
<dbReference type="InterPro" id="IPR027417">
    <property type="entry name" value="P-loop_NTPase"/>
</dbReference>
<dbReference type="InterPro" id="IPR005225">
    <property type="entry name" value="Small_GTP-bd"/>
</dbReference>
<dbReference type="InterPro" id="IPR000795">
    <property type="entry name" value="T_Tr_GTP-bd_dom"/>
</dbReference>
<dbReference type="NCBIfam" id="TIGR01393">
    <property type="entry name" value="lepA"/>
    <property type="match status" value="1"/>
</dbReference>
<dbReference type="NCBIfam" id="TIGR00231">
    <property type="entry name" value="small_GTP"/>
    <property type="match status" value="1"/>
</dbReference>
<dbReference type="PANTHER" id="PTHR43512:SF4">
    <property type="entry name" value="TRANSLATION FACTOR GUF1 HOMOLOG, CHLOROPLASTIC"/>
    <property type="match status" value="1"/>
</dbReference>
<dbReference type="PANTHER" id="PTHR43512">
    <property type="entry name" value="TRANSLATION FACTOR GUF1-RELATED"/>
    <property type="match status" value="1"/>
</dbReference>
<dbReference type="Pfam" id="PF00679">
    <property type="entry name" value="EFG_C"/>
    <property type="match status" value="1"/>
</dbReference>
<dbReference type="Pfam" id="PF00009">
    <property type="entry name" value="GTP_EFTU"/>
    <property type="match status" value="1"/>
</dbReference>
<dbReference type="Pfam" id="PF03144">
    <property type="entry name" value="GTP_EFTU_D2"/>
    <property type="match status" value="1"/>
</dbReference>
<dbReference type="Pfam" id="PF06421">
    <property type="entry name" value="LepA_C"/>
    <property type="match status" value="1"/>
</dbReference>
<dbReference type="PRINTS" id="PR00315">
    <property type="entry name" value="ELONGATNFCT"/>
</dbReference>
<dbReference type="SUPFAM" id="SSF54980">
    <property type="entry name" value="EF-G C-terminal domain-like"/>
    <property type="match status" value="2"/>
</dbReference>
<dbReference type="SUPFAM" id="SSF52540">
    <property type="entry name" value="P-loop containing nucleoside triphosphate hydrolases"/>
    <property type="match status" value="1"/>
</dbReference>
<dbReference type="PROSITE" id="PS51722">
    <property type="entry name" value="G_TR_2"/>
    <property type="match status" value="1"/>
</dbReference>
<proteinExistence type="inferred from homology"/>
<organism>
    <name type="scientific">Ectopseudomonas mendocina (strain ymp)</name>
    <name type="common">Pseudomonas mendocina</name>
    <dbReference type="NCBI Taxonomy" id="399739"/>
    <lineage>
        <taxon>Bacteria</taxon>
        <taxon>Pseudomonadati</taxon>
        <taxon>Pseudomonadota</taxon>
        <taxon>Gammaproteobacteria</taxon>
        <taxon>Pseudomonadales</taxon>
        <taxon>Pseudomonadaceae</taxon>
        <taxon>Ectopseudomonas</taxon>
    </lineage>
</organism>
<comment type="function">
    <text evidence="1">Required for accurate and efficient protein synthesis under certain stress conditions. May act as a fidelity factor of the translation reaction, by catalyzing a one-codon backward translocation of tRNAs on improperly translocated ribosomes. Back-translocation proceeds from a post-translocation (POST) complex to a pre-translocation (PRE) complex, thus giving elongation factor G a second chance to translocate the tRNAs correctly. Binds to ribosomes in a GTP-dependent manner.</text>
</comment>
<comment type="catalytic activity">
    <reaction evidence="1">
        <text>GTP + H2O = GDP + phosphate + H(+)</text>
        <dbReference type="Rhea" id="RHEA:19669"/>
        <dbReference type="ChEBI" id="CHEBI:15377"/>
        <dbReference type="ChEBI" id="CHEBI:15378"/>
        <dbReference type="ChEBI" id="CHEBI:37565"/>
        <dbReference type="ChEBI" id="CHEBI:43474"/>
        <dbReference type="ChEBI" id="CHEBI:58189"/>
        <dbReference type="EC" id="3.6.5.n1"/>
    </reaction>
</comment>
<comment type="subcellular location">
    <subcellularLocation>
        <location evidence="1">Cell inner membrane</location>
        <topology evidence="1">Peripheral membrane protein</topology>
        <orientation evidence="1">Cytoplasmic side</orientation>
    </subcellularLocation>
</comment>
<comment type="similarity">
    <text evidence="1">Belongs to the TRAFAC class translation factor GTPase superfamily. Classic translation factor GTPase family. LepA subfamily.</text>
</comment>